<name>Y469_PSEPW</name>
<sequence length="189" mass="20243">MKTLAPSYLKHQFLIAMPHMADPNFAQTLTYIVEHNANGAMGLVVNRPQELNLADILEQLRPDEEPPASTLQVPIYQGGPVQTDRGFVLHSSECSYQATVELQGLSLSTSQDVLFAIAEGVGPQKSLITLGYAGWEAGQLEAELADNAWLNCPFDPDIIFGLASEQRLGAAAASLGINLSLLTSQAGHA</sequence>
<reference key="1">
    <citation type="submission" date="2008-02" db="EMBL/GenBank/DDBJ databases">
        <title>Complete sequence of Pseudomonas putida W619.</title>
        <authorList>
            <person name="Copeland A."/>
            <person name="Lucas S."/>
            <person name="Lapidus A."/>
            <person name="Barry K."/>
            <person name="Detter J.C."/>
            <person name="Glavina del Rio T."/>
            <person name="Dalin E."/>
            <person name="Tice H."/>
            <person name="Pitluck S."/>
            <person name="Chain P."/>
            <person name="Malfatti S."/>
            <person name="Shin M."/>
            <person name="Vergez L."/>
            <person name="Schmutz J."/>
            <person name="Larimer F."/>
            <person name="Land M."/>
            <person name="Hauser L."/>
            <person name="Kyrpides N."/>
            <person name="Kim E."/>
            <person name="Taghavi S."/>
            <person name="Vangronsveld D."/>
            <person name="van der Lelie D."/>
            <person name="Richardson P."/>
        </authorList>
    </citation>
    <scope>NUCLEOTIDE SEQUENCE [LARGE SCALE GENOMIC DNA]</scope>
    <source>
        <strain>W619</strain>
    </source>
</reference>
<protein>
    <recommendedName>
        <fullName evidence="1">UPF0301 protein PputW619_0469</fullName>
    </recommendedName>
</protein>
<dbReference type="EMBL" id="CP000949">
    <property type="protein sequence ID" value="ACA70974.1"/>
    <property type="molecule type" value="Genomic_DNA"/>
</dbReference>
<dbReference type="SMR" id="B1J358"/>
<dbReference type="STRING" id="390235.PputW619_0469"/>
<dbReference type="KEGG" id="ppw:PputW619_0469"/>
<dbReference type="eggNOG" id="COG1678">
    <property type="taxonomic scope" value="Bacteria"/>
</dbReference>
<dbReference type="HOGENOM" id="CLU_057596_1_0_6"/>
<dbReference type="OrthoDB" id="9807486at2"/>
<dbReference type="GO" id="GO:0005829">
    <property type="term" value="C:cytosol"/>
    <property type="evidence" value="ECO:0007669"/>
    <property type="project" value="TreeGrafter"/>
</dbReference>
<dbReference type="Gene3D" id="3.40.1740.10">
    <property type="entry name" value="VC0467-like"/>
    <property type="match status" value="1"/>
</dbReference>
<dbReference type="HAMAP" id="MF_00758">
    <property type="entry name" value="UPF0301"/>
    <property type="match status" value="1"/>
</dbReference>
<dbReference type="InterPro" id="IPR003774">
    <property type="entry name" value="AlgH-like"/>
</dbReference>
<dbReference type="NCBIfam" id="NF001266">
    <property type="entry name" value="PRK00228.1-1"/>
    <property type="match status" value="1"/>
</dbReference>
<dbReference type="PANTHER" id="PTHR30327">
    <property type="entry name" value="UNCHARACTERIZED PROTEIN YQGE"/>
    <property type="match status" value="1"/>
</dbReference>
<dbReference type="PANTHER" id="PTHR30327:SF1">
    <property type="entry name" value="UPF0301 PROTEIN YQGE"/>
    <property type="match status" value="1"/>
</dbReference>
<dbReference type="Pfam" id="PF02622">
    <property type="entry name" value="DUF179"/>
    <property type="match status" value="1"/>
</dbReference>
<dbReference type="SUPFAM" id="SSF143456">
    <property type="entry name" value="VC0467-like"/>
    <property type="match status" value="1"/>
</dbReference>
<accession>B1J358</accession>
<proteinExistence type="inferred from homology"/>
<organism>
    <name type="scientific">Pseudomonas putida (strain W619)</name>
    <dbReference type="NCBI Taxonomy" id="390235"/>
    <lineage>
        <taxon>Bacteria</taxon>
        <taxon>Pseudomonadati</taxon>
        <taxon>Pseudomonadota</taxon>
        <taxon>Gammaproteobacteria</taxon>
        <taxon>Pseudomonadales</taxon>
        <taxon>Pseudomonadaceae</taxon>
        <taxon>Pseudomonas</taxon>
    </lineage>
</organism>
<evidence type="ECO:0000255" key="1">
    <source>
        <dbReference type="HAMAP-Rule" id="MF_00758"/>
    </source>
</evidence>
<gene>
    <name type="ordered locus">PputW619_0469</name>
</gene>
<comment type="similarity">
    <text evidence="1">Belongs to the UPF0301 (AlgH) family.</text>
</comment>
<feature type="chain" id="PRO_1000198287" description="UPF0301 protein PputW619_0469">
    <location>
        <begin position="1"/>
        <end position="189"/>
    </location>
</feature>